<reference key="1">
    <citation type="submission" date="2008-02" db="EMBL/GenBank/DDBJ databases">
        <title>Complete sequence of Shewanella woodyi ATCC 51908.</title>
        <authorList>
            <consortium name="US DOE Joint Genome Institute"/>
            <person name="Copeland A."/>
            <person name="Lucas S."/>
            <person name="Lapidus A."/>
            <person name="Glavina del Rio T."/>
            <person name="Dalin E."/>
            <person name="Tice H."/>
            <person name="Bruce D."/>
            <person name="Goodwin L."/>
            <person name="Pitluck S."/>
            <person name="Sims D."/>
            <person name="Brettin T."/>
            <person name="Detter J.C."/>
            <person name="Han C."/>
            <person name="Kuske C.R."/>
            <person name="Schmutz J."/>
            <person name="Larimer F."/>
            <person name="Land M."/>
            <person name="Hauser L."/>
            <person name="Kyrpides N."/>
            <person name="Lykidis A."/>
            <person name="Zhao J.-S."/>
            <person name="Richardson P."/>
        </authorList>
    </citation>
    <scope>NUCLEOTIDE SEQUENCE [LARGE SCALE GENOMIC DNA]</scope>
    <source>
        <strain>ATCC 51908 / MS32</strain>
    </source>
</reference>
<comment type="function">
    <text evidence="1">IGPS catalyzes the conversion of PRFAR and glutamine to IGP, AICAR and glutamate. The HisF subunit catalyzes the cyclization activity that produces IGP and AICAR from PRFAR using the ammonia provided by the HisH subunit.</text>
</comment>
<comment type="catalytic activity">
    <reaction evidence="1">
        <text>5-[(5-phospho-1-deoxy-D-ribulos-1-ylimino)methylamino]-1-(5-phospho-beta-D-ribosyl)imidazole-4-carboxamide + L-glutamine = D-erythro-1-(imidazol-4-yl)glycerol 3-phosphate + 5-amino-1-(5-phospho-beta-D-ribosyl)imidazole-4-carboxamide + L-glutamate + H(+)</text>
        <dbReference type="Rhea" id="RHEA:24793"/>
        <dbReference type="ChEBI" id="CHEBI:15378"/>
        <dbReference type="ChEBI" id="CHEBI:29985"/>
        <dbReference type="ChEBI" id="CHEBI:58278"/>
        <dbReference type="ChEBI" id="CHEBI:58359"/>
        <dbReference type="ChEBI" id="CHEBI:58475"/>
        <dbReference type="ChEBI" id="CHEBI:58525"/>
        <dbReference type="EC" id="4.3.2.10"/>
    </reaction>
</comment>
<comment type="pathway">
    <text evidence="1">Amino-acid biosynthesis; L-histidine biosynthesis; L-histidine from 5-phospho-alpha-D-ribose 1-diphosphate: step 5/9.</text>
</comment>
<comment type="subunit">
    <text evidence="1">Heterodimer of HisH and HisF.</text>
</comment>
<comment type="subcellular location">
    <subcellularLocation>
        <location evidence="1">Cytoplasm</location>
    </subcellularLocation>
</comment>
<comment type="similarity">
    <text evidence="1">Belongs to the HisA/HisF family.</text>
</comment>
<accession>B1KRF9</accession>
<gene>
    <name evidence="1" type="primary">hisF</name>
    <name type="ordered locus">Swoo_2082</name>
</gene>
<organism>
    <name type="scientific">Shewanella woodyi (strain ATCC 51908 / MS32)</name>
    <dbReference type="NCBI Taxonomy" id="392500"/>
    <lineage>
        <taxon>Bacteria</taxon>
        <taxon>Pseudomonadati</taxon>
        <taxon>Pseudomonadota</taxon>
        <taxon>Gammaproteobacteria</taxon>
        <taxon>Alteromonadales</taxon>
        <taxon>Shewanellaceae</taxon>
        <taxon>Shewanella</taxon>
    </lineage>
</organism>
<evidence type="ECO:0000255" key="1">
    <source>
        <dbReference type="HAMAP-Rule" id="MF_01013"/>
    </source>
</evidence>
<keyword id="KW-0028">Amino-acid biosynthesis</keyword>
<keyword id="KW-0963">Cytoplasm</keyword>
<keyword id="KW-0368">Histidine biosynthesis</keyword>
<keyword id="KW-0456">Lyase</keyword>
<keyword id="KW-1185">Reference proteome</keyword>
<name>HIS6_SHEWM</name>
<protein>
    <recommendedName>
        <fullName evidence="1">Imidazole glycerol phosphate synthase subunit HisF</fullName>
        <ecNumber evidence="1">4.3.2.10</ecNumber>
    </recommendedName>
    <alternativeName>
        <fullName evidence="1">IGP synthase cyclase subunit</fullName>
    </alternativeName>
    <alternativeName>
        <fullName evidence="1">IGP synthase subunit HisF</fullName>
    </alternativeName>
    <alternativeName>
        <fullName evidence="1">ImGP synthase subunit HisF</fullName>
        <shortName evidence="1">IGPS subunit HisF</shortName>
    </alternativeName>
</protein>
<proteinExistence type="inferred from homology"/>
<feature type="chain" id="PRO_1000135047" description="Imidazole glycerol phosphate synthase subunit HisF">
    <location>
        <begin position="1"/>
        <end position="257"/>
    </location>
</feature>
<feature type="active site" evidence="1">
    <location>
        <position position="11"/>
    </location>
</feature>
<feature type="active site" evidence="1">
    <location>
        <position position="130"/>
    </location>
</feature>
<dbReference type="EC" id="4.3.2.10" evidence="1"/>
<dbReference type="EMBL" id="CP000961">
    <property type="protein sequence ID" value="ACA86366.1"/>
    <property type="molecule type" value="Genomic_DNA"/>
</dbReference>
<dbReference type="RefSeq" id="WP_012324711.1">
    <property type="nucleotide sequence ID" value="NC_010506.1"/>
</dbReference>
<dbReference type="SMR" id="B1KRF9"/>
<dbReference type="STRING" id="392500.Swoo_2082"/>
<dbReference type="KEGG" id="swd:Swoo_2082"/>
<dbReference type="eggNOG" id="COG0107">
    <property type="taxonomic scope" value="Bacteria"/>
</dbReference>
<dbReference type="HOGENOM" id="CLU_048577_4_0_6"/>
<dbReference type="UniPathway" id="UPA00031">
    <property type="reaction ID" value="UER00010"/>
</dbReference>
<dbReference type="Proteomes" id="UP000002168">
    <property type="component" value="Chromosome"/>
</dbReference>
<dbReference type="GO" id="GO:0005737">
    <property type="term" value="C:cytoplasm"/>
    <property type="evidence" value="ECO:0007669"/>
    <property type="project" value="UniProtKB-SubCell"/>
</dbReference>
<dbReference type="GO" id="GO:0000107">
    <property type="term" value="F:imidazoleglycerol-phosphate synthase activity"/>
    <property type="evidence" value="ECO:0007669"/>
    <property type="project" value="UniProtKB-UniRule"/>
</dbReference>
<dbReference type="GO" id="GO:0016829">
    <property type="term" value="F:lyase activity"/>
    <property type="evidence" value="ECO:0007669"/>
    <property type="project" value="UniProtKB-KW"/>
</dbReference>
<dbReference type="GO" id="GO:0000105">
    <property type="term" value="P:L-histidine biosynthetic process"/>
    <property type="evidence" value="ECO:0007669"/>
    <property type="project" value="UniProtKB-UniRule"/>
</dbReference>
<dbReference type="CDD" id="cd04731">
    <property type="entry name" value="HisF"/>
    <property type="match status" value="1"/>
</dbReference>
<dbReference type="FunFam" id="3.20.20.70:FF:000006">
    <property type="entry name" value="Imidazole glycerol phosphate synthase subunit HisF"/>
    <property type="match status" value="1"/>
</dbReference>
<dbReference type="Gene3D" id="3.20.20.70">
    <property type="entry name" value="Aldolase class I"/>
    <property type="match status" value="1"/>
</dbReference>
<dbReference type="HAMAP" id="MF_01013">
    <property type="entry name" value="HisF"/>
    <property type="match status" value="1"/>
</dbReference>
<dbReference type="InterPro" id="IPR013785">
    <property type="entry name" value="Aldolase_TIM"/>
</dbReference>
<dbReference type="InterPro" id="IPR006062">
    <property type="entry name" value="His_biosynth"/>
</dbReference>
<dbReference type="InterPro" id="IPR004651">
    <property type="entry name" value="HisF"/>
</dbReference>
<dbReference type="InterPro" id="IPR050064">
    <property type="entry name" value="IGPS_HisA/HisF"/>
</dbReference>
<dbReference type="InterPro" id="IPR011060">
    <property type="entry name" value="RibuloseP-bd_barrel"/>
</dbReference>
<dbReference type="NCBIfam" id="TIGR00735">
    <property type="entry name" value="hisF"/>
    <property type="match status" value="1"/>
</dbReference>
<dbReference type="PANTHER" id="PTHR21235:SF2">
    <property type="entry name" value="IMIDAZOLE GLYCEROL PHOSPHATE SYNTHASE HISHF"/>
    <property type="match status" value="1"/>
</dbReference>
<dbReference type="PANTHER" id="PTHR21235">
    <property type="entry name" value="IMIDAZOLE GLYCEROL PHOSPHATE SYNTHASE SUBUNIT HISF/H IGP SYNTHASE SUBUNIT HISF/H"/>
    <property type="match status" value="1"/>
</dbReference>
<dbReference type="Pfam" id="PF00977">
    <property type="entry name" value="His_biosynth"/>
    <property type="match status" value="1"/>
</dbReference>
<dbReference type="SUPFAM" id="SSF51366">
    <property type="entry name" value="Ribulose-phoshate binding barrel"/>
    <property type="match status" value="1"/>
</dbReference>
<sequence length="257" mass="28635">MLAKRIVPCLDVREGKVVKGVQFRNHEIVGDIVPLAARYAEEGADELVFYDITASAHDRVIDKSWVSRVAERIDIPFCVAGGISSIEQAREKLAFGADKISVNSPALSDPSLIQRLQDEFGRQCIVIGIDSYYDEASDSYRVKQFTGDESATKDTQWFTQNWVEEVQKRGCGEIVLNVMNQDGVRQGYDLKQLSIIREICDVPLIASGGAGTMEHFKDVFEIAKVDAALAASVFHKGIIDINELKTYLAQHKIPTRR</sequence>